<name>ARGD_PROMP</name>
<evidence type="ECO:0000255" key="1">
    <source>
        <dbReference type="HAMAP-Rule" id="MF_01107"/>
    </source>
</evidence>
<evidence type="ECO:0000305" key="2"/>
<organism>
    <name type="scientific">Prochlorococcus marinus subsp. pastoris (strain CCMP1986 / NIES-2087 / MED4)</name>
    <dbReference type="NCBI Taxonomy" id="59919"/>
    <lineage>
        <taxon>Bacteria</taxon>
        <taxon>Bacillati</taxon>
        <taxon>Cyanobacteriota</taxon>
        <taxon>Cyanophyceae</taxon>
        <taxon>Synechococcales</taxon>
        <taxon>Prochlorococcaceae</taxon>
        <taxon>Prochlorococcus</taxon>
    </lineage>
</organism>
<protein>
    <recommendedName>
        <fullName evidence="1">Acetylornithine aminotransferase</fullName>
        <shortName evidence="1">ACOAT</shortName>
        <ecNumber evidence="1">2.6.1.11</ecNumber>
    </recommendedName>
</protein>
<keyword id="KW-0028">Amino-acid biosynthesis</keyword>
<keyword id="KW-0032">Aminotransferase</keyword>
<keyword id="KW-0055">Arginine biosynthesis</keyword>
<keyword id="KW-0963">Cytoplasm</keyword>
<keyword id="KW-0663">Pyridoxal phosphate</keyword>
<keyword id="KW-0808">Transferase</keyword>
<reference key="1">
    <citation type="journal article" date="2003" name="Nature">
        <title>Genome divergence in two Prochlorococcus ecotypes reflects oceanic niche differentiation.</title>
        <authorList>
            <person name="Rocap G."/>
            <person name="Larimer F.W."/>
            <person name="Lamerdin J.E."/>
            <person name="Malfatti S."/>
            <person name="Chain P."/>
            <person name="Ahlgren N.A."/>
            <person name="Arellano A."/>
            <person name="Coleman M."/>
            <person name="Hauser L."/>
            <person name="Hess W.R."/>
            <person name="Johnson Z.I."/>
            <person name="Land M.L."/>
            <person name="Lindell D."/>
            <person name="Post A.F."/>
            <person name="Regala W."/>
            <person name="Shah M."/>
            <person name="Shaw S.L."/>
            <person name="Steglich C."/>
            <person name="Sullivan M.B."/>
            <person name="Ting C.S."/>
            <person name="Tolonen A."/>
            <person name="Webb E.A."/>
            <person name="Zinser E.R."/>
            <person name="Chisholm S.W."/>
        </authorList>
    </citation>
    <scope>NUCLEOTIDE SEQUENCE [LARGE SCALE GENOMIC DNA]</scope>
    <source>
        <strain>CCMP1986 / NIES-2087 / MED4</strain>
    </source>
</reference>
<gene>
    <name evidence="1" type="primary">argD</name>
    <name type="ordered locus">PMM1301</name>
</gene>
<proteinExistence type="inferred from homology"/>
<accession>Q7V0G0</accession>
<comment type="catalytic activity">
    <reaction evidence="1">
        <text>N(2)-acetyl-L-ornithine + 2-oxoglutarate = N-acetyl-L-glutamate 5-semialdehyde + L-glutamate</text>
        <dbReference type="Rhea" id="RHEA:18049"/>
        <dbReference type="ChEBI" id="CHEBI:16810"/>
        <dbReference type="ChEBI" id="CHEBI:29123"/>
        <dbReference type="ChEBI" id="CHEBI:29985"/>
        <dbReference type="ChEBI" id="CHEBI:57805"/>
        <dbReference type="EC" id="2.6.1.11"/>
    </reaction>
</comment>
<comment type="cofactor">
    <cofactor evidence="1">
        <name>pyridoxal 5'-phosphate</name>
        <dbReference type="ChEBI" id="CHEBI:597326"/>
    </cofactor>
    <text evidence="1">Binds 1 pyridoxal phosphate per subunit.</text>
</comment>
<comment type="pathway">
    <text evidence="1">Amino-acid biosynthesis; L-arginine biosynthesis; N(2)-acetyl-L-ornithine from L-glutamate: step 4/4.</text>
</comment>
<comment type="subunit">
    <text evidence="1">Homodimer.</text>
</comment>
<comment type="subcellular location">
    <subcellularLocation>
        <location evidence="1">Cytoplasm</location>
    </subcellularLocation>
</comment>
<comment type="miscellaneous">
    <text evidence="1">May also have succinyldiaminopimelate aminotransferase activity, thus carrying out the corresponding step in lysine biosynthesis.</text>
</comment>
<comment type="similarity">
    <text evidence="1">Belongs to the class-III pyridoxal-phosphate-dependent aminotransferase family. ArgD subfamily.</text>
</comment>
<comment type="sequence caution" evidence="2">
    <conflict type="erroneous initiation">
        <sequence resource="EMBL-CDS" id="CAE19760"/>
    </conflict>
</comment>
<dbReference type="EC" id="2.6.1.11" evidence="1"/>
<dbReference type="EMBL" id="BX548174">
    <property type="protein sequence ID" value="CAE19760.1"/>
    <property type="status" value="ALT_INIT"/>
    <property type="molecule type" value="Genomic_DNA"/>
</dbReference>
<dbReference type="SMR" id="Q7V0G0"/>
<dbReference type="STRING" id="59919.PMM1301"/>
<dbReference type="KEGG" id="pmm:PMM1301"/>
<dbReference type="eggNOG" id="COG4992">
    <property type="taxonomic scope" value="Bacteria"/>
</dbReference>
<dbReference type="HOGENOM" id="CLU_016922_10_1_3"/>
<dbReference type="UniPathway" id="UPA00068">
    <property type="reaction ID" value="UER00109"/>
</dbReference>
<dbReference type="Proteomes" id="UP000001026">
    <property type="component" value="Chromosome"/>
</dbReference>
<dbReference type="GO" id="GO:0005737">
    <property type="term" value="C:cytoplasm"/>
    <property type="evidence" value="ECO:0007669"/>
    <property type="project" value="UniProtKB-SubCell"/>
</dbReference>
<dbReference type="GO" id="GO:0042802">
    <property type="term" value="F:identical protein binding"/>
    <property type="evidence" value="ECO:0007669"/>
    <property type="project" value="TreeGrafter"/>
</dbReference>
<dbReference type="GO" id="GO:0003992">
    <property type="term" value="F:N2-acetyl-L-ornithine:2-oxoglutarate 5-aminotransferase activity"/>
    <property type="evidence" value="ECO:0007669"/>
    <property type="project" value="UniProtKB-UniRule"/>
</dbReference>
<dbReference type="GO" id="GO:0030170">
    <property type="term" value="F:pyridoxal phosphate binding"/>
    <property type="evidence" value="ECO:0007669"/>
    <property type="project" value="InterPro"/>
</dbReference>
<dbReference type="GO" id="GO:0006526">
    <property type="term" value="P:L-arginine biosynthetic process"/>
    <property type="evidence" value="ECO:0007669"/>
    <property type="project" value="UniProtKB-UniRule"/>
</dbReference>
<dbReference type="CDD" id="cd00610">
    <property type="entry name" value="OAT_like"/>
    <property type="match status" value="1"/>
</dbReference>
<dbReference type="FunFam" id="3.40.640.10:FF:000004">
    <property type="entry name" value="Acetylornithine aminotransferase"/>
    <property type="match status" value="1"/>
</dbReference>
<dbReference type="Gene3D" id="3.90.1150.10">
    <property type="entry name" value="Aspartate Aminotransferase, domain 1"/>
    <property type="match status" value="1"/>
</dbReference>
<dbReference type="Gene3D" id="3.40.640.10">
    <property type="entry name" value="Type I PLP-dependent aspartate aminotransferase-like (Major domain)"/>
    <property type="match status" value="1"/>
</dbReference>
<dbReference type="HAMAP" id="MF_01107">
    <property type="entry name" value="ArgD_aminotrans_3"/>
    <property type="match status" value="1"/>
</dbReference>
<dbReference type="InterPro" id="IPR004636">
    <property type="entry name" value="AcOrn/SuccOrn_fam"/>
</dbReference>
<dbReference type="InterPro" id="IPR005814">
    <property type="entry name" value="Aminotrans_3"/>
</dbReference>
<dbReference type="InterPro" id="IPR049704">
    <property type="entry name" value="Aminotrans_3_PPA_site"/>
</dbReference>
<dbReference type="InterPro" id="IPR050103">
    <property type="entry name" value="Class-III_PLP-dep_AT"/>
</dbReference>
<dbReference type="InterPro" id="IPR015424">
    <property type="entry name" value="PyrdxlP-dep_Trfase"/>
</dbReference>
<dbReference type="InterPro" id="IPR015421">
    <property type="entry name" value="PyrdxlP-dep_Trfase_major"/>
</dbReference>
<dbReference type="InterPro" id="IPR015422">
    <property type="entry name" value="PyrdxlP-dep_Trfase_small"/>
</dbReference>
<dbReference type="NCBIfam" id="TIGR00707">
    <property type="entry name" value="argD"/>
    <property type="match status" value="1"/>
</dbReference>
<dbReference type="NCBIfam" id="NF002325">
    <property type="entry name" value="PRK01278.1"/>
    <property type="match status" value="1"/>
</dbReference>
<dbReference type="PANTHER" id="PTHR11986:SF79">
    <property type="entry name" value="ACETYLORNITHINE AMINOTRANSFERASE, MITOCHONDRIAL"/>
    <property type="match status" value="1"/>
</dbReference>
<dbReference type="PANTHER" id="PTHR11986">
    <property type="entry name" value="AMINOTRANSFERASE CLASS III"/>
    <property type="match status" value="1"/>
</dbReference>
<dbReference type="Pfam" id="PF00202">
    <property type="entry name" value="Aminotran_3"/>
    <property type="match status" value="1"/>
</dbReference>
<dbReference type="PIRSF" id="PIRSF000521">
    <property type="entry name" value="Transaminase_4ab_Lys_Orn"/>
    <property type="match status" value="1"/>
</dbReference>
<dbReference type="SUPFAM" id="SSF53383">
    <property type="entry name" value="PLP-dependent transferases"/>
    <property type="match status" value="1"/>
</dbReference>
<dbReference type="PROSITE" id="PS00600">
    <property type="entry name" value="AA_TRANSFER_CLASS_3"/>
    <property type="match status" value="1"/>
</dbReference>
<sequence>MVDAPHSKCGTFGYVGSSPTAPTLMNTYTRFDISFKKGNGCWLWDEKGKKYLDAVAGIATCSLGHSNRILRKKLSAQLKKVQHISNLYKIEEQEELSKYLTKQSCAESVFFCNSGAEANESAIKLIKKYGNTVHKGKESFILAAESSFHGRTLATLSATGQPKYQKGFEPMVKGFKFFKYNDIASVKKLFEELKANNQKASGILVEPIQGEGGVIPGDKKFFKELREICNKYNSLLILDEVQSGVGRTGKMWGYENLEIEPDGFTLAKGLGGGHAIGALLVQKKANIFTPGDHASTFGGNPFACRAAITVLEEIKRRKILKNVLERGNQLNEGFTKISAKFPKIISGIRGLGLIQGLVINDSYTDAKTITLKAFDKGLLLVPAGGNVVRFVPPLIISRNEINILLKKLDLIFEEM</sequence>
<feature type="chain" id="PRO_0000112767" description="Acetylornithine aminotransferase">
    <location>
        <begin position="1"/>
        <end position="415"/>
    </location>
</feature>
<feature type="binding site" evidence="1">
    <location>
        <begin position="115"/>
        <end position="116"/>
    </location>
    <ligand>
        <name>pyridoxal 5'-phosphate</name>
        <dbReference type="ChEBI" id="CHEBI:597326"/>
    </ligand>
</feature>
<feature type="binding site" evidence="1">
    <location>
        <position position="148"/>
    </location>
    <ligand>
        <name>pyridoxal 5'-phosphate</name>
        <dbReference type="ChEBI" id="CHEBI:597326"/>
    </ligand>
</feature>
<feature type="binding site" evidence="1">
    <location>
        <position position="151"/>
    </location>
    <ligand>
        <name>N(2)-acetyl-L-ornithine</name>
        <dbReference type="ChEBI" id="CHEBI:57805"/>
    </ligand>
</feature>
<feature type="binding site" evidence="1">
    <location>
        <begin position="239"/>
        <end position="242"/>
    </location>
    <ligand>
        <name>pyridoxal 5'-phosphate</name>
        <dbReference type="ChEBI" id="CHEBI:597326"/>
    </ligand>
</feature>
<feature type="binding site" evidence="1">
    <location>
        <position position="295"/>
    </location>
    <ligand>
        <name>N(2)-acetyl-L-ornithine</name>
        <dbReference type="ChEBI" id="CHEBI:57805"/>
    </ligand>
</feature>
<feature type="binding site" evidence="1">
    <location>
        <position position="296"/>
    </location>
    <ligand>
        <name>pyridoxal 5'-phosphate</name>
        <dbReference type="ChEBI" id="CHEBI:597326"/>
    </ligand>
</feature>
<feature type="modified residue" description="N6-(pyridoxal phosphate)lysine" evidence="1">
    <location>
        <position position="268"/>
    </location>
</feature>